<accession>Q5DVH6</accession>
<evidence type="ECO:0000250" key="1">
    <source>
        <dbReference type="UniProtKB" id="P42766"/>
    </source>
</evidence>
<evidence type="ECO:0000305" key="2"/>
<reference key="1">
    <citation type="submission" date="2004-09" db="EMBL/GenBank/DDBJ databases">
        <title>Gene expression responses of flounder to cadmium, 3-methylcholanthrene and estradiol.</title>
        <authorList>
            <person name="Williams T.D."/>
            <person name="Diab A.M."/>
            <person name="Sabine V.S."/>
            <person name="Godfrey R.E."/>
            <person name="Minchin S.D."/>
            <person name="George S.G."/>
            <person name="Chipman J.K."/>
        </authorList>
    </citation>
    <scope>NUCLEOTIDE SEQUENCE [MRNA]</scope>
    <source>
        <tissue>Liver</tissue>
    </source>
</reference>
<organism>
    <name type="scientific">Platichthys flesus</name>
    <name type="common">European flounder</name>
    <name type="synonym">Pleuronectes flesus</name>
    <dbReference type="NCBI Taxonomy" id="8260"/>
    <lineage>
        <taxon>Eukaryota</taxon>
        <taxon>Metazoa</taxon>
        <taxon>Chordata</taxon>
        <taxon>Craniata</taxon>
        <taxon>Vertebrata</taxon>
        <taxon>Euteleostomi</taxon>
        <taxon>Actinopterygii</taxon>
        <taxon>Neopterygii</taxon>
        <taxon>Teleostei</taxon>
        <taxon>Neoteleostei</taxon>
        <taxon>Acanthomorphata</taxon>
        <taxon>Carangaria</taxon>
        <taxon>Pleuronectiformes</taxon>
        <taxon>Pleuronectoidei</taxon>
        <taxon>Pleuronectidae</taxon>
        <taxon>Platichthys</taxon>
    </lineage>
</organism>
<gene>
    <name type="primary">rpl35</name>
</gene>
<sequence length="123" mass="14439">MAKIKARDLRGKKKEELLKQLDDLKNEPSQLRVAKVTGGAASKLTKICVVRKSIARVLTVINQTQKENLRKFYKGKKYKPLDLRPRKTRALRRRLNKHEESLRTKKQQRKDLLYSIRKFAVKA</sequence>
<comment type="function">
    <text evidence="1">Component of the large ribosomal subunit. The ribosome is a large ribonucleoprotein complex responsible for the synthesis of proteins in the cell.</text>
</comment>
<comment type="subunit">
    <text evidence="1">Component of the large ribosomal subunit.</text>
</comment>
<comment type="subcellular location">
    <subcellularLocation>
        <location evidence="1">Cytoplasm</location>
    </subcellularLocation>
</comment>
<comment type="similarity">
    <text evidence="2">Belongs to the universal ribosomal protein uL29 family.</text>
</comment>
<protein>
    <recommendedName>
        <fullName evidence="2">Large ribosomal subunit protein uL29</fullName>
    </recommendedName>
    <alternativeName>
        <fullName>60S ribosomal protein L35</fullName>
    </alternativeName>
</protein>
<feature type="chain" id="PRO_0000130540" description="Large ribosomal subunit protein uL29">
    <location>
        <begin position="1"/>
        <end position="123"/>
    </location>
</feature>
<keyword id="KW-0963">Cytoplasm</keyword>
<keyword id="KW-0687">Ribonucleoprotein</keyword>
<keyword id="KW-0689">Ribosomal protein</keyword>
<name>RL35_PLAFE</name>
<dbReference type="EMBL" id="AJ843090">
    <property type="protein sequence ID" value="CAH57702.1"/>
    <property type="molecule type" value="mRNA"/>
</dbReference>
<dbReference type="SMR" id="Q5DVH6"/>
<dbReference type="GO" id="GO:0022625">
    <property type="term" value="C:cytosolic large ribosomal subunit"/>
    <property type="evidence" value="ECO:0007669"/>
    <property type="project" value="InterPro"/>
</dbReference>
<dbReference type="GO" id="GO:0003729">
    <property type="term" value="F:mRNA binding"/>
    <property type="evidence" value="ECO:0007669"/>
    <property type="project" value="TreeGrafter"/>
</dbReference>
<dbReference type="GO" id="GO:0003735">
    <property type="term" value="F:structural constituent of ribosome"/>
    <property type="evidence" value="ECO:0007669"/>
    <property type="project" value="InterPro"/>
</dbReference>
<dbReference type="GO" id="GO:0000463">
    <property type="term" value="P:maturation of LSU-rRNA from tricistronic rRNA transcript (SSU-rRNA, 5.8S rRNA, LSU-rRNA)"/>
    <property type="evidence" value="ECO:0007669"/>
    <property type="project" value="InterPro"/>
</dbReference>
<dbReference type="GO" id="GO:0006412">
    <property type="term" value="P:translation"/>
    <property type="evidence" value="ECO:0007669"/>
    <property type="project" value="InterPro"/>
</dbReference>
<dbReference type="CDD" id="cd00427">
    <property type="entry name" value="Ribosomal_L29_HIP"/>
    <property type="match status" value="1"/>
</dbReference>
<dbReference type="FunFam" id="1.10.287.310:FF:000002">
    <property type="entry name" value="60S ribosomal protein L35"/>
    <property type="match status" value="1"/>
</dbReference>
<dbReference type="FunFam" id="6.10.250.3450:FF:000001">
    <property type="entry name" value="60S ribosomal protein L35"/>
    <property type="match status" value="1"/>
</dbReference>
<dbReference type="Gene3D" id="1.10.287.310">
    <property type="match status" value="1"/>
</dbReference>
<dbReference type="Gene3D" id="6.10.250.3450">
    <property type="match status" value="1"/>
</dbReference>
<dbReference type="HAMAP" id="MF_00374">
    <property type="entry name" value="Ribosomal_uL29"/>
    <property type="match status" value="1"/>
</dbReference>
<dbReference type="InterPro" id="IPR001854">
    <property type="entry name" value="Ribosomal_uL29"/>
</dbReference>
<dbReference type="InterPro" id="IPR045059">
    <property type="entry name" value="Ribosomal_uL29_euk"/>
</dbReference>
<dbReference type="InterPro" id="IPR036049">
    <property type="entry name" value="Ribosomal_uL29_sf"/>
</dbReference>
<dbReference type="NCBIfam" id="TIGR00012">
    <property type="entry name" value="L29"/>
    <property type="match status" value="1"/>
</dbReference>
<dbReference type="PANTHER" id="PTHR45722">
    <property type="entry name" value="60S RIBOSOMAL PROTEIN L35"/>
    <property type="match status" value="1"/>
</dbReference>
<dbReference type="PANTHER" id="PTHR45722:SF2">
    <property type="entry name" value="LARGE RIBOSOMAL SUBUNIT PROTEIN UL29-RELATED"/>
    <property type="match status" value="1"/>
</dbReference>
<dbReference type="Pfam" id="PF00831">
    <property type="entry name" value="Ribosomal_L29"/>
    <property type="match status" value="1"/>
</dbReference>
<dbReference type="SUPFAM" id="SSF46561">
    <property type="entry name" value="Ribosomal protein L29 (L29p)"/>
    <property type="match status" value="1"/>
</dbReference>
<proteinExistence type="evidence at transcript level"/>